<reference key="1">
    <citation type="journal article" date="2004" name="Nucleic Acids Res.">
        <title>Genome sequence of Symbiobacterium thermophilum, an uncultivable bacterium that depends on microbial commensalism.</title>
        <authorList>
            <person name="Ueda K."/>
            <person name="Yamashita A."/>
            <person name="Ishikawa J."/>
            <person name="Shimada M."/>
            <person name="Watsuji T."/>
            <person name="Morimura K."/>
            <person name="Ikeda H."/>
            <person name="Hattori M."/>
            <person name="Beppu T."/>
        </authorList>
    </citation>
    <scope>NUCLEOTIDE SEQUENCE [LARGE SCALE GENOMIC DNA]</scope>
    <source>
        <strain>DSM 24528 / JCM 14929 / IAM 14863 / T</strain>
    </source>
</reference>
<organism>
    <name type="scientific">Symbiobacterium thermophilum (strain DSM 24528 / JCM 14929 / IAM 14863 / T)</name>
    <dbReference type="NCBI Taxonomy" id="292459"/>
    <lineage>
        <taxon>Bacteria</taxon>
        <taxon>Bacillati</taxon>
        <taxon>Bacillota</taxon>
        <taxon>Clostridia</taxon>
        <taxon>Eubacteriales</taxon>
        <taxon>Symbiobacteriaceae</taxon>
        <taxon>Symbiobacterium</taxon>
    </lineage>
</organism>
<keyword id="KW-0963">Cytoplasm</keyword>
<keyword id="KW-0570">Pentose shunt</keyword>
<keyword id="KW-1185">Reference proteome</keyword>
<keyword id="KW-0704">Schiff base</keyword>
<keyword id="KW-0808">Transferase</keyword>
<protein>
    <recommendedName>
        <fullName evidence="1">Probable transaldolase</fullName>
        <ecNumber evidence="1">2.2.1.2</ecNumber>
    </recommendedName>
</protein>
<proteinExistence type="inferred from homology"/>
<dbReference type="EC" id="2.2.1.2" evidence="1"/>
<dbReference type="EMBL" id="AP006840">
    <property type="protein sequence ID" value="BAD39051.1"/>
    <property type="molecule type" value="Genomic_DNA"/>
</dbReference>
<dbReference type="RefSeq" id="WP_011194201.1">
    <property type="nucleotide sequence ID" value="NC_006177.1"/>
</dbReference>
<dbReference type="SMR" id="Q67TE2"/>
<dbReference type="STRING" id="292459.STH66"/>
<dbReference type="KEGG" id="sth:STH66"/>
<dbReference type="eggNOG" id="COG0176">
    <property type="taxonomic scope" value="Bacteria"/>
</dbReference>
<dbReference type="HOGENOM" id="CLU_079764_0_0_9"/>
<dbReference type="OrthoDB" id="9807051at2"/>
<dbReference type="UniPathway" id="UPA00115">
    <property type="reaction ID" value="UER00414"/>
</dbReference>
<dbReference type="Proteomes" id="UP000000417">
    <property type="component" value="Chromosome"/>
</dbReference>
<dbReference type="GO" id="GO:0005737">
    <property type="term" value="C:cytoplasm"/>
    <property type="evidence" value="ECO:0007669"/>
    <property type="project" value="UniProtKB-SubCell"/>
</dbReference>
<dbReference type="GO" id="GO:0016832">
    <property type="term" value="F:aldehyde-lyase activity"/>
    <property type="evidence" value="ECO:0007669"/>
    <property type="project" value="InterPro"/>
</dbReference>
<dbReference type="GO" id="GO:0004801">
    <property type="term" value="F:transaldolase activity"/>
    <property type="evidence" value="ECO:0007669"/>
    <property type="project" value="UniProtKB-UniRule"/>
</dbReference>
<dbReference type="GO" id="GO:0005975">
    <property type="term" value="P:carbohydrate metabolic process"/>
    <property type="evidence" value="ECO:0007669"/>
    <property type="project" value="InterPro"/>
</dbReference>
<dbReference type="GO" id="GO:0006098">
    <property type="term" value="P:pentose-phosphate shunt"/>
    <property type="evidence" value="ECO:0007669"/>
    <property type="project" value="UniProtKB-UniRule"/>
</dbReference>
<dbReference type="CDD" id="cd00956">
    <property type="entry name" value="Transaldolase_FSA"/>
    <property type="match status" value="1"/>
</dbReference>
<dbReference type="FunFam" id="3.20.20.70:FF:000018">
    <property type="entry name" value="Probable transaldolase"/>
    <property type="match status" value="1"/>
</dbReference>
<dbReference type="Gene3D" id="3.20.20.70">
    <property type="entry name" value="Aldolase class I"/>
    <property type="match status" value="1"/>
</dbReference>
<dbReference type="HAMAP" id="MF_00494">
    <property type="entry name" value="Transaldolase_3b"/>
    <property type="match status" value="1"/>
</dbReference>
<dbReference type="InterPro" id="IPR013785">
    <property type="entry name" value="Aldolase_TIM"/>
</dbReference>
<dbReference type="InterPro" id="IPR001585">
    <property type="entry name" value="TAL/FSA"/>
</dbReference>
<dbReference type="InterPro" id="IPR022999">
    <property type="entry name" value="Transaldolase_3B"/>
</dbReference>
<dbReference type="InterPro" id="IPR004731">
    <property type="entry name" value="Transaldolase_3B/F6P_aldolase"/>
</dbReference>
<dbReference type="InterPro" id="IPR018225">
    <property type="entry name" value="Transaldolase_AS"/>
</dbReference>
<dbReference type="InterPro" id="IPR033919">
    <property type="entry name" value="TSA/FSA_arc/bac"/>
</dbReference>
<dbReference type="NCBIfam" id="TIGR00875">
    <property type="entry name" value="fsa_talC_mipB"/>
    <property type="match status" value="1"/>
</dbReference>
<dbReference type="PANTHER" id="PTHR10683">
    <property type="entry name" value="TRANSALDOLASE"/>
    <property type="match status" value="1"/>
</dbReference>
<dbReference type="PANTHER" id="PTHR10683:SF36">
    <property type="entry name" value="TRANSALDOLASE"/>
    <property type="match status" value="1"/>
</dbReference>
<dbReference type="Pfam" id="PF00923">
    <property type="entry name" value="TAL_FSA"/>
    <property type="match status" value="1"/>
</dbReference>
<dbReference type="SUPFAM" id="SSF51569">
    <property type="entry name" value="Aldolase"/>
    <property type="match status" value="1"/>
</dbReference>
<dbReference type="PROSITE" id="PS01054">
    <property type="entry name" value="TRANSALDOLASE_1"/>
    <property type="match status" value="1"/>
</dbReference>
<sequence length="216" mass="23580">MKLFIDTANVDDIREVASWGVLSGVTTNPSLVAKEGRDFMQVLREILEIVDGPISAEVISLQADDMVEEARQYYELHKNIVIKLPMTAEGLKACARLSAKGVRCNMTLIFSPNQALLCARAGAAFVSPFVGRLDDISTDGIQLIRDTAEIFDLHGIDTEIIAASIRTPGQVVEAAKAGAHIATIPPKVFHQMLKHPLTDSGIERFLKDWEAAKGRV</sequence>
<accession>Q67TE2</accession>
<comment type="function">
    <text evidence="1">Transaldolase is important for the balance of metabolites in the pentose-phosphate pathway.</text>
</comment>
<comment type="catalytic activity">
    <reaction evidence="1">
        <text>D-sedoheptulose 7-phosphate + D-glyceraldehyde 3-phosphate = D-erythrose 4-phosphate + beta-D-fructose 6-phosphate</text>
        <dbReference type="Rhea" id="RHEA:17053"/>
        <dbReference type="ChEBI" id="CHEBI:16897"/>
        <dbReference type="ChEBI" id="CHEBI:57483"/>
        <dbReference type="ChEBI" id="CHEBI:57634"/>
        <dbReference type="ChEBI" id="CHEBI:59776"/>
        <dbReference type="EC" id="2.2.1.2"/>
    </reaction>
</comment>
<comment type="pathway">
    <text evidence="1">Carbohydrate degradation; pentose phosphate pathway; D-glyceraldehyde 3-phosphate and beta-D-fructose 6-phosphate from D-ribose 5-phosphate and D-xylulose 5-phosphate (non-oxidative stage): step 2/3.</text>
</comment>
<comment type="subcellular location">
    <subcellularLocation>
        <location evidence="1">Cytoplasm</location>
    </subcellularLocation>
</comment>
<comment type="similarity">
    <text evidence="1">Belongs to the transaldolase family. Type 3B subfamily.</text>
</comment>
<gene>
    <name evidence="1" type="primary">tal</name>
    <name type="ordered locus">STH66</name>
</gene>
<name>TAL_SYMTH</name>
<feature type="chain" id="PRO_1000126362" description="Probable transaldolase">
    <location>
        <begin position="1"/>
        <end position="216"/>
    </location>
</feature>
<feature type="active site" description="Schiff-base intermediate with substrate" evidence="1">
    <location>
        <position position="83"/>
    </location>
</feature>
<evidence type="ECO:0000255" key="1">
    <source>
        <dbReference type="HAMAP-Rule" id="MF_00494"/>
    </source>
</evidence>